<organism>
    <name type="scientific">Stenotrophomonas maltophilia (strain R551-3)</name>
    <dbReference type="NCBI Taxonomy" id="391008"/>
    <lineage>
        <taxon>Bacteria</taxon>
        <taxon>Pseudomonadati</taxon>
        <taxon>Pseudomonadota</taxon>
        <taxon>Gammaproteobacteria</taxon>
        <taxon>Lysobacterales</taxon>
        <taxon>Lysobacteraceae</taxon>
        <taxon>Stenotrophomonas</taxon>
        <taxon>Stenotrophomonas maltophilia group</taxon>
    </lineage>
</organism>
<proteinExistence type="inferred from homology"/>
<comment type="catalytic activity">
    <reaction evidence="1">
        <text>2-formamido-N(1)-(5-O-phospho-beta-D-ribosyl)acetamidine + ATP = 5-amino-1-(5-phospho-beta-D-ribosyl)imidazole + ADP + phosphate + H(+)</text>
        <dbReference type="Rhea" id="RHEA:23032"/>
        <dbReference type="ChEBI" id="CHEBI:15378"/>
        <dbReference type="ChEBI" id="CHEBI:30616"/>
        <dbReference type="ChEBI" id="CHEBI:43474"/>
        <dbReference type="ChEBI" id="CHEBI:137981"/>
        <dbReference type="ChEBI" id="CHEBI:147287"/>
        <dbReference type="ChEBI" id="CHEBI:456216"/>
        <dbReference type="EC" id="6.3.3.1"/>
    </reaction>
</comment>
<comment type="pathway">
    <text evidence="1">Purine metabolism; IMP biosynthesis via de novo pathway; 5-amino-1-(5-phospho-D-ribosyl)imidazole from N(2)-formyl-N(1)-(5-phospho-D-ribosyl)glycinamide: step 2/2.</text>
</comment>
<comment type="subcellular location">
    <subcellularLocation>
        <location evidence="1">Cytoplasm</location>
    </subcellularLocation>
</comment>
<comment type="similarity">
    <text evidence="1">Belongs to the AIR synthase family.</text>
</comment>
<keyword id="KW-0067">ATP-binding</keyword>
<keyword id="KW-0963">Cytoplasm</keyword>
<keyword id="KW-0436">Ligase</keyword>
<keyword id="KW-0547">Nucleotide-binding</keyword>
<keyword id="KW-0658">Purine biosynthesis</keyword>
<evidence type="ECO:0000255" key="1">
    <source>
        <dbReference type="HAMAP-Rule" id="MF_00741"/>
    </source>
</evidence>
<reference key="1">
    <citation type="submission" date="2008-06" db="EMBL/GenBank/DDBJ databases">
        <title>Complete sequence of Stenotrophomonas maltophilia R551-3.</title>
        <authorList>
            <consortium name="US DOE Joint Genome Institute"/>
            <person name="Lucas S."/>
            <person name="Copeland A."/>
            <person name="Lapidus A."/>
            <person name="Glavina del Rio T."/>
            <person name="Dalin E."/>
            <person name="Tice H."/>
            <person name="Pitluck S."/>
            <person name="Chain P."/>
            <person name="Malfatti S."/>
            <person name="Shin M."/>
            <person name="Vergez L."/>
            <person name="Lang D."/>
            <person name="Schmutz J."/>
            <person name="Larimer F."/>
            <person name="Land M."/>
            <person name="Hauser L."/>
            <person name="Kyrpides N."/>
            <person name="Mikhailova N."/>
            <person name="Taghavi S."/>
            <person name="Monchy S."/>
            <person name="Newman L."/>
            <person name="Vangronsveld J."/>
            <person name="van der Lelie D."/>
            <person name="Richardson P."/>
        </authorList>
    </citation>
    <scope>NUCLEOTIDE SEQUENCE [LARGE SCALE GENOMIC DNA]</scope>
    <source>
        <strain>R551-3</strain>
    </source>
</reference>
<accession>B4SN29</accession>
<dbReference type="EC" id="6.3.3.1" evidence="1"/>
<dbReference type="EMBL" id="CP001111">
    <property type="protein sequence ID" value="ACF50674.1"/>
    <property type="molecule type" value="Genomic_DNA"/>
</dbReference>
<dbReference type="RefSeq" id="WP_012510294.1">
    <property type="nucleotide sequence ID" value="NC_011071.1"/>
</dbReference>
<dbReference type="SMR" id="B4SN29"/>
<dbReference type="STRING" id="391008.Smal_0969"/>
<dbReference type="KEGG" id="smt:Smal_0969"/>
<dbReference type="eggNOG" id="COG0150">
    <property type="taxonomic scope" value="Bacteria"/>
</dbReference>
<dbReference type="HOGENOM" id="CLU_047116_0_0_6"/>
<dbReference type="OrthoDB" id="9777881at2"/>
<dbReference type="UniPathway" id="UPA00074">
    <property type="reaction ID" value="UER00129"/>
</dbReference>
<dbReference type="Proteomes" id="UP000001867">
    <property type="component" value="Chromosome"/>
</dbReference>
<dbReference type="GO" id="GO:0005829">
    <property type="term" value="C:cytosol"/>
    <property type="evidence" value="ECO:0007669"/>
    <property type="project" value="TreeGrafter"/>
</dbReference>
<dbReference type="GO" id="GO:0005524">
    <property type="term" value="F:ATP binding"/>
    <property type="evidence" value="ECO:0007669"/>
    <property type="project" value="UniProtKB-KW"/>
</dbReference>
<dbReference type="GO" id="GO:0004637">
    <property type="term" value="F:phosphoribosylamine-glycine ligase activity"/>
    <property type="evidence" value="ECO:0007669"/>
    <property type="project" value="TreeGrafter"/>
</dbReference>
<dbReference type="GO" id="GO:0004641">
    <property type="term" value="F:phosphoribosylformylglycinamidine cyclo-ligase activity"/>
    <property type="evidence" value="ECO:0007669"/>
    <property type="project" value="UniProtKB-UniRule"/>
</dbReference>
<dbReference type="GO" id="GO:0006189">
    <property type="term" value="P:'de novo' IMP biosynthetic process"/>
    <property type="evidence" value="ECO:0007669"/>
    <property type="project" value="UniProtKB-UniRule"/>
</dbReference>
<dbReference type="GO" id="GO:0046084">
    <property type="term" value="P:adenine biosynthetic process"/>
    <property type="evidence" value="ECO:0007669"/>
    <property type="project" value="TreeGrafter"/>
</dbReference>
<dbReference type="CDD" id="cd02196">
    <property type="entry name" value="PurM"/>
    <property type="match status" value="1"/>
</dbReference>
<dbReference type="FunFam" id="3.30.1330.10:FF:000001">
    <property type="entry name" value="Phosphoribosylformylglycinamidine cyclo-ligase"/>
    <property type="match status" value="1"/>
</dbReference>
<dbReference type="FunFam" id="3.90.650.10:FF:000001">
    <property type="entry name" value="Phosphoribosylformylglycinamidine cyclo-ligase"/>
    <property type="match status" value="1"/>
</dbReference>
<dbReference type="Gene3D" id="3.90.650.10">
    <property type="entry name" value="PurM-like C-terminal domain"/>
    <property type="match status" value="1"/>
</dbReference>
<dbReference type="Gene3D" id="3.30.1330.10">
    <property type="entry name" value="PurM-like, N-terminal domain"/>
    <property type="match status" value="1"/>
</dbReference>
<dbReference type="HAMAP" id="MF_00741">
    <property type="entry name" value="AIRS"/>
    <property type="match status" value="1"/>
</dbReference>
<dbReference type="InterPro" id="IPR010918">
    <property type="entry name" value="PurM-like_C_dom"/>
</dbReference>
<dbReference type="InterPro" id="IPR036676">
    <property type="entry name" value="PurM-like_C_sf"/>
</dbReference>
<dbReference type="InterPro" id="IPR016188">
    <property type="entry name" value="PurM-like_N"/>
</dbReference>
<dbReference type="InterPro" id="IPR036921">
    <property type="entry name" value="PurM-like_N_sf"/>
</dbReference>
<dbReference type="InterPro" id="IPR004733">
    <property type="entry name" value="PurM_cligase"/>
</dbReference>
<dbReference type="NCBIfam" id="TIGR00878">
    <property type="entry name" value="purM"/>
    <property type="match status" value="1"/>
</dbReference>
<dbReference type="PANTHER" id="PTHR10520:SF12">
    <property type="entry name" value="TRIFUNCTIONAL PURINE BIOSYNTHETIC PROTEIN ADENOSINE-3"/>
    <property type="match status" value="1"/>
</dbReference>
<dbReference type="PANTHER" id="PTHR10520">
    <property type="entry name" value="TRIFUNCTIONAL PURINE BIOSYNTHETIC PROTEIN ADENOSINE-3-RELATED"/>
    <property type="match status" value="1"/>
</dbReference>
<dbReference type="Pfam" id="PF00586">
    <property type="entry name" value="AIRS"/>
    <property type="match status" value="1"/>
</dbReference>
<dbReference type="Pfam" id="PF02769">
    <property type="entry name" value="AIRS_C"/>
    <property type="match status" value="1"/>
</dbReference>
<dbReference type="SUPFAM" id="SSF56042">
    <property type="entry name" value="PurM C-terminal domain-like"/>
    <property type="match status" value="1"/>
</dbReference>
<dbReference type="SUPFAM" id="SSF55326">
    <property type="entry name" value="PurM N-terminal domain-like"/>
    <property type="match status" value="1"/>
</dbReference>
<name>PUR5_STRM5</name>
<gene>
    <name evidence="1" type="primary">purM</name>
    <name type="ordered locus">Smal_0969</name>
</gene>
<protein>
    <recommendedName>
        <fullName evidence="1">Phosphoribosylformylglycinamidine cyclo-ligase</fullName>
        <ecNumber evidence="1">6.3.3.1</ecNumber>
    </recommendedName>
    <alternativeName>
        <fullName evidence="1">AIR synthase</fullName>
    </alternativeName>
    <alternativeName>
        <fullName evidence="1">AIRS</fullName>
    </alternativeName>
    <alternativeName>
        <fullName evidence="1">Phosphoribosyl-aminoimidazole synthetase</fullName>
    </alternativeName>
</protein>
<sequence>MTNTPSSAPSPLTYRDAGVDIDAGNELVERIKPLVKRSFRPEVMGGLGGFGALFDLSNKYREPVLVSGTDGVGTKLKLAHQLNRHDTIGIDLVAMCVNDVLVQGAEPLFFLDYFATGKLDIDTAAAVVGGIANGCTEAGCALIGGETAEMPDMYAPGEYDLAGFTVAAVEKSELKDGASVAAGDVLIGIASSGPHSNGYSLVRRIYDRAGRPAELELEGGVKLVDALMAPTRLYVKPILSLLKSHGAAIHGMAHITGGGLTENIIRVVPEGLGLDIQASSWTLPPVFQWLQKEGAVADSEMWRTFNCGIGFVLIVAPDQVAAVSEAVKAQGLDHWTIGQVVTAEGAERVHIG</sequence>
<feature type="chain" id="PRO_1000193046" description="Phosphoribosylformylglycinamidine cyclo-ligase">
    <location>
        <begin position="1"/>
        <end position="352"/>
    </location>
</feature>